<keyword id="KW-0046">Antibiotic resistance</keyword>
<keyword id="KW-0067">ATP-binding</keyword>
<keyword id="KW-0963">Cytoplasm</keyword>
<keyword id="KW-0275">Fatty acid biosynthesis</keyword>
<keyword id="KW-0276">Fatty acid metabolism</keyword>
<keyword id="KW-0444">Lipid biosynthesis</keyword>
<keyword id="KW-0443">Lipid metabolism</keyword>
<keyword id="KW-0547">Nucleotide-binding</keyword>
<keyword id="KW-1185">Reference proteome</keyword>
<keyword id="KW-0808">Transferase</keyword>
<sequence length="319" mass="35344">MSLNFLDFEQPIAELEAKIDSLTAVSRQDEKLDINIDEEVHRLREKSVELTRKIFADLGAWQVAQLARHPQRPYTLDYVRLAFDEFDELAGDRAYADDKAIVGGIARLEGRPVMIIGHQKGRETKEKIRRNFGMPAPEGYRKALRLMEMAERFNMPIITFIDTPGAYPGVGAEERGQSEAIARNLREMSRLNVPVICTVIGEGGSGGALAIGVGDKVNMLQYSTYSVISPEGCASILWKSADKAPLAAEAMGIIAPRLKELKLIDSIIPEPLGGAHRNPEAMAASLKAQLLEDLADLDVLSTDDLKNRRYQRLMSYGYA</sequence>
<name>ACCA_SALTY</name>
<organism>
    <name type="scientific">Salmonella typhimurium (strain LT2 / SGSC1412 / ATCC 700720)</name>
    <dbReference type="NCBI Taxonomy" id="99287"/>
    <lineage>
        <taxon>Bacteria</taxon>
        <taxon>Pseudomonadati</taxon>
        <taxon>Pseudomonadota</taxon>
        <taxon>Gammaproteobacteria</taxon>
        <taxon>Enterobacterales</taxon>
        <taxon>Enterobacteriaceae</taxon>
        <taxon>Salmonella</taxon>
    </lineage>
</organism>
<dbReference type="EC" id="2.1.3.15" evidence="2"/>
<dbReference type="EMBL" id="AE006468">
    <property type="protein sequence ID" value="AAL19196.1"/>
    <property type="molecule type" value="Genomic_DNA"/>
</dbReference>
<dbReference type="EMBL" id="M26046">
    <property type="status" value="NOT_ANNOTATED_CDS"/>
    <property type="molecule type" value="Genomic_DNA"/>
</dbReference>
<dbReference type="RefSeq" id="NP_459237.1">
    <property type="nucleotide sequence ID" value="NC_003197.2"/>
</dbReference>
<dbReference type="RefSeq" id="WP_000055753.1">
    <property type="nucleotide sequence ID" value="NC_003197.2"/>
</dbReference>
<dbReference type="SMR" id="P0A1C3"/>
<dbReference type="STRING" id="99287.STM0232"/>
<dbReference type="PaxDb" id="99287-STM0232"/>
<dbReference type="GeneID" id="1251750"/>
<dbReference type="KEGG" id="stm:STM0232"/>
<dbReference type="PATRIC" id="fig|99287.12.peg.245"/>
<dbReference type="HOGENOM" id="CLU_015486_0_2_6"/>
<dbReference type="OMA" id="RNFGMAN"/>
<dbReference type="PhylomeDB" id="P0A1C3"/>
<dbReference type="BioCyc" id="SENT99287:STM0232-MONOMER"/>
<dbReference type="UniPathway" id="UPA00655">
    <property type="reaction ID" value="UER00711"/>
</dbReference>
<dbReference type="Proteomes" id="UP000001014">
    <property type="component" value="Chromosome"/>
</dbReference>
<dbReference type="GO" id="GO:0009317">
    <property type="term" value="C:acetyl-CoA carboxylase complex"/>
    <property type="evidence" value="ECO:0007669"/>
    <property type="project" value="InterPro"/>
</dbReference>
<dbReference type="GO" id="GO:0003989">
    <property type="term" value="F:acetyl-CoA carboxylase activity"/>
    <property type="evidence" value="ECO:0007669"/>
    <property type="project" value="InterPro"/>
</dbReference>
<dbReference type="GO" id="GO:0005524">
    <property type="term" value="F:ATP binding"/>
    <property type="evidence" value="ECO:0007669"/>
    <property type="project" value="UniProtKB-KW"/>
</dbReference>
<dbReference type="GO" id="GO:0016743">
    <property type="term" value="F:carboxyl- or carbamoyltransferase activity"/>
    <property type="evidence" value="ECO:0007669"/>
    <property type="project" value="UniProtKB-UniRule"/>
</dbReference>
<dbReference type="GO" id="GO:0006633">
    <property type="term" value="P:fatty acid biosynthetic process"/>
    <property type="evidence" value="ECO:0007669"/>
    <property type="project" value="UniProtKB-KW"/>
</dbReference>
<dbReference type="GO" id="GO:2001295">
    <property type="term" value="P:malonyl-CoA biosynthetic process"/>
    <property type="evidence" value="ECO:0007669"/>
    <property type="project" value="UniProtKB-UniRule"/>
</dbReference>
<dbReference type="GO" id="GO:0046677">
    <property type="term" value="P:response to antibiotic"/>
    <property type="evidence" value="ECO:0007669"/>
    <property type="project" value="UniProtKB-KW"/>
</dbReference>
<dbReference type="FunFam" id="3.90.226.10:FF:000008">
    <property type="entry name" value="Acetyl-coenzyme A carboxylase carboxyl transferase subunit alpha"/>
    <property type="match status" value="1"/>
</dbReference>
<dbReference type="Gene3D" id="3.90.226.10">
    <property type="entry name" value="2-enoyl-CoA Hydratase, Chain A, domain 1"/>
    <property type="match status" value="1"/>
</dbReference>
<dbReference type="HAMAP" id="MF_00823">
    <property type="entry name" value="AcetylCoA_CT_alpha"/>
    <property type="match status" value="1"/>
</dbReference>
<dbReference type="InterPro" id="IPR001095">
    <property type="entry name" value="Acetyl_CoA_COase_a_su"/>
</dbReference>
<dbReference type="InterPro" id="IPR029045">
    <property type="entry name" value="ClpP/crotonase-like_dom_sf"/>
</dbReference>
<dbReference type="InterPro" id="IPR011763">
    <property type="entry name" value="COA_CT_C"/>
</dbReference>
<dbReference type="NCBIfam" id="TIGR00513">
    <property type="entry name" value="accA"/>
    <property type="match status" value="1"/>
</dbReference>
<dbReference type="NCBIfam" id="NF041504">
    <property type="entry name" value="AccA_sub"/>
    <property type="match status" value="1"/>
</dbReference>
<dbReference type="NCBIfam" id="NF004344">
    <property type="entry name" value="PRK05724.1"/>
    <property type="match status" value="1"/>
</dbReference>
<dbReference type="PANTHER" id="PTHR42853">
    <property type="entry name" value="ACETYL-COENZYME A CARBOXYLASE CARBOXYL TRANSFERASE SUBUNIT ALPHA"/>
    <property type="match status" value="1"/>
</dbReference>
<dbReference type="PANTHER" id="PTHR42853:SF3">
    <property type="entry name" value="ACETYL-COENZYME A CARBOXYLASE CARBOXYL TRANSFERASE SUBUNIT ALPHA, CHLOROPLASTIC"/>
    <property type="match status" value="1"/>
</dbReference>
<dbReference type="Pfam" id="PF03255">
    <property type="entry name" value="ACCA"/>
    <property type="match status" value="1"/>
</dbReference>
<dbReference type="PRINTS" id="PR01069">
    <property type="entry name" value="ACCCTRFRASEA"/>
</dbReference>
<dbReference type="SUPFAM" id="SSF52096">
    <property type="entry name" value="ClpP/crotonase"/>
    <property type="match status" value="1"/>
</dbReference>
<dbReference type="PROSITE" id="PS50989">
    <property type="entry name" value="COA_CT_CTER"/>
    <property type="match status" value="1"/>
</dbReference>
<reference key="1">
    <citation type="journal article" date="2001" name="Nature">
        <title>Complete genome sequence of Salmonella enterica serovar Typhimurium LT2.</title>
        <authorList>
            <person name="McClelland M."/>
            <person name="Sanderson K.E."/>
            <person name="Spieth J."/>
            <person name="Clifton S.W."/>
            <person name="Latreille P."/>
            <person name="Courtney L."/>
            <person name="Porwollik S."/>
            <person name="Ali J."/>
            <person name="Dante M."/>
            <person name="Du F."/>
            <person name="Hou S."/>
            <person name="Layman D."/>
            <person name="Leonard S."/>
            <person name="Nguyen C."/>
            <person name="Scott K."/>
            <person name="Holmes A."/>
            <person name="Grewal N."/>
            <person name="Mulvaney E."/>
            <person name="Ryan E."/>
            <person name="Sun H."/>
            <person name="Florea L."/>
            <person name="Miller W."/>
            <person name="Stoneking T."/>
            <person name="Nhan M."/>
            <person name="Waterston R."/>
            <person name="Wilson R.K."/>
        </authorList>
    </citation>
    <scope>NUCLEOTIDE SEQUENCE [LARGE SCALE GENOMIC DNA]</scope>
    <source>
        <strain>LT2 / SGSC1412 / ATCC 700720</strain>
    </source>
</reference>
<reference key="2">
    <citation type="journal article" date="1989" name="J. Bacteriol.">
        <title>Nucleotide sequences of dnaE, the gene for the polymerase subunit of DNA polymerase III in Salmonella typhimurium, and a variant that facilitates growth in the absence of another polymerase subunit.</title>
        <authorList>
            <person name="Lancy E.D."/>
            <person name="Lifsics M.R."/>
            <person name="Munson P."/>
            <person name="Maurer R."/>
        </authorList>
    </citation>
    <scope>NUCLEOTIDE SEQUENCE [GENOMIC DNA] OF 1-36</scope>
</reference>
<reference key="3">
    <citation type="journal article" date="2018" name="Antimicrob. Agents Chemother.">
        <title>Thailandamide, a Fatty Acid Synthesis Antibiotic That Is Coexpressed with a Resistant Target Gene.</title>
        <authorList>
            <person name="Wozniak C.E."/>
            <person name="Lin Z."/>
            <person name="Schmidt E.W."/>
            <person name="Hughes K.T."/>
            <person name="Liou T.G."/>
        </authorList>
    </citation>
    <scope>ANTIBIOTIC RESISTANCE</scope>
    <scope>MUTAGENESIS OF PRO-164; PRO-168 AND SER-229</scope>
    <source>
        <strain>LT2 / SGSC1412 / ATCC 700720</strain>
    </source>
</reference>
<proteinExistence type="evidence at protein level"/>
<accession>P0A1C3</accession>
<accession>P40674</accession>
<comment type="function">
    <text evidence="2">Component of the acetyl coenzyme A carboxylase (ACC) complex. First, biotin carboxylase catalyzes the carboxylation of biotin on its carrier protein (BCCP) and then the CO(2) group is transferred by the carboxyltransferase to acetyl-CoA to form malonyl-CoA.</text>
</comment>
<comment type="catalytic activity">
    <reaction evidence="2">
        <text>N(6)-carboxybiotinyl-L-lysyl-[protein] + acetyl-CoA = N(6)-biotinyl-L-lysyl-[protein] + malonyl-CoA</text>
        <dbReference type="Rhea" id="RHEA:54728"/>
        <dbReference type="Rhea" id="RHEA-COMP:10505"/>
        <dbReference type="Rhea" id="RHEA-COMP:10506"/>
        <dbReference type="ChEBI" id="CHEBI:57288"/>
        <dbReference type="ChEBI" id="CHEBI:57384"/>
        <dbReference type="ChEBI" id="CHEBI:83144"/>
        <dbReference type="ChEBI" id="CHEBI:83145"/>
        <dbReference type="EC" id="2.1.3.15"/>
    </reaction>
</comment>
<comment type="pathway">
    <text evidence="2">Lipid metabolism; malonyl-CoA biosynthesis; malonyl-CoA from acetyl-CoA: step 1/1.</text>
</comment>
<comment type="subunit">
    <text evidence="2">Acetyl-CoA carboxylase is a heterohexamer composed of biotin carboxyl carrier protein (AccB), biotin carboxylase (AccC) and two subunits each of ACCase subunit alpha (AccA) and ACCase subunit beta (AccD).</text>
</comment>
<comment type="subcellular location">
    <subcellularLocation>
        <location evidence="2">Cytoplasm</location>
    </subcellularLocation>
</comment>
<comment type="similarity">
    <text evidence="2">Belongs to the AccA family.</text>
</comment>
<protein>
    <recommendedName>
        <fullName evidence="2">Acetyl-coenzyme A carboxylase carboxyl transferase subunit alpha</fullName>
        <shortName evidence="2">ACCase subunit alpha</shortName>
        <shortName evidence="2">Acetyl-CoA carboxylase carboxyltransferase subunit alpha</shortName>
        <ecNumber evidence="2">2.1.3.15</ecNumber>
    </recommendedName>
</protein>
<feature type="initiator methionine" description="Removed" evidence="1">
    <location>
        <position position="1"/>
    </location>
</feature>
<feature type="chain" id="PRO_0000146777" description="Acetyl-coenzyme A carboxylase carboxyl transferase subunit alpha">
    <location>
        <begin position="2"/>
        <end position="319"/>
    </location>
</feature>
<feature type="domain" description="CoA carboxyltransferase C-terminal" evidence="3">
    <location>
        <begin position="35"/>
        <end position="296"/>
    </location>
</feature>
<feature type="mutagenesis site" description="Resistance to polyketide antibiotic thailandamide." evidence="4">
    <original>P</original>
    <variation>L</variation>
    <variation>Q</variation>
    <variation>S</variation>
    <variation>T</variation>
    <location>
        <position position="164"/>
    </location>
</feature>
<feature type="mutagenesis site" description="Resistance to thailandamide." evidence="4">
    <original>P</original>
    <variation>H</variation>
    <location>
        <position position="168"/>
    </location>
</feature>
<feature type="mutagenesis site" description="Resistance to thailandamide." evidence="4">
    <original>S</original>
    <variation>T</variation>
    <location>
        <position position="229"/>
    </location>
</feature>
<feature type="sequence conflict" description="In Ref. 2; M26046." evidence="5" ref="2">
    <original>A</original>
    <variation>R</variation>
    <location>
        <position position="17"/>
    </location>
</feature>
<evidence type="ECO:0000250" key="1">
    <source>
        <dbReference type="UniProtKB" id="P0ABD5"/>
    </source>
</evidence>
<evidence type="ECO:0000255" key="2">
    <source>
        <dbReference type="HAMAP-Rule" id="MF_00823"/>
    </source>
</evidence>
<evidence type="ECO:0000255" key="3">
    <source>
        <dbReference type="PROSITE-ProRule" id="PRU01137"/>
    </source>
</evidence>
<evidence type="ECO:0000269" key="4">
    <source>
    </source>
</evidence>
<evidence type="ECO:0000305" key="5"/>
<gene>
    <name evidence="2" type="primary">accA</name>
    <name type="ordered locus">STM0232</name>
</gene>